<keyword id="KW-0963">Cytoplasm</keyword>
<keyword id="KW-0489">Methyltransferase</keyword>
<keyword id="KW-0698">rRNA processing</keyword>
<keyword id="KW-0949">S-adenosyl-L-methionine</keyword>
<keyword id="KW-0808">Transferase</keyword>
<sequence length="206" mass="23159">MSKGSSTKKWLHEHTSDYYVIQANKLGYRSRASFKILEIQDKYQLFKPNMFVVDLGAAPGGWSEQVIKYIGKNGKLIALDLLEMAPIAGVEFIQGDFSSDETYQKLNTLVNNQKIDCVISDMAPNLSGNKTSDQAKSIYLLELALDFANTNLNKNGSFVAKVFQGQGSDEYLKLVRESFNKVIQFKPKSSRAKSREFYVIATEFKG</sequence>
<reference key="1">
    <citation type="journal article" date="2007" name="PLoS ONE">
        <title>Genome sequencing shows that European isolates of Francisella tularensis subspecies tularensis are almost identical to US laboratory strain Schu S4.</title>
        <authorList>
            <person name="Chaudhuri R.R."/>
            <person name="Ren C.-P."/>
            <person name="Desmond L."/>
            <person name="Vincent G.A."/>
            <person name="Silman N.J."/>
            <person name="Brehm J.K."/>
            <person name="Elmore M.J."/>
            <person name="Hudson M.J."/>
            <person name="Forsman M."/>
            <person name="Isherwood K.E."/>
            <person name="Gurycova D."/>
            <person name="Minton N.P."/>
            <person name="Titball R.W."/>
            <person name="Pallen M.J."/>
            <person name="Vipond R."/>
        </authorList>
    </citation>
    <scope>NUCLEOTIDE SEQUENCE [LARGE SCALE GENOMIC DNA]</scope>
    <source>
        <strain>FSC 198</strain>
    </source>
</reference>
<name>RLME_FRAT1</name>
<protein>
    <recommendedName>
        <fullName evidence="1">Ribosomal RNA large subunit methyltransferase E</fullName>
        <ecNumber evidence="1">2.1.1.166</ecNumber>
    </recommendedName>
    <alternativeName>
        <fullName evidence="1">23S rRNA Um2552 methyltransferase</fullName>
    </alternativeName>
    <alternativeName>
        <fullName evidence="1">rRNA (uridine-2'-O-)-methyltransferase</fullName>
    </alternativeName>
</protein>
<feature type="chain" id="PRO_0000282749" description="Ribosomal RNA large subunit methyltransferase E">
    <location>
        <begin position="1"/>
        <end position="206"/>
    </location>
</feature>
<feature type="active site" description="Proton acceptor" evidence="1">
    <location>
        <position position="161"/>
    </location>
</feature>
<feature type="binding site" evidence="1">
    <location>
        <position position="60"/>
    </location>
    <ligand>
        <name>S-adenosyl-L-methionine</name>
        <dbReference type="ChEBI" id="CHEBI:59789"/>
    </ligand>
</feature>
<feature type="binding site" evidence="1">
    <location>
        <position position="62"/>
    </location>
    <ligand>
        <name>S-adenosyl-L-methionine</name>
        <dbReference type="ChEBI" id="CHEBI:59789"/>
    </ligand>
</feature>
<feature type="binding site" evidence="1">
    <location>
        <position position="80"/>
    </location>
    <ligand>
        <name>S-adenosyl-L-methionine</name>
        <dbReference type="ChEBI" id="CHEBI:59789"/>
    </ligand>
</feature>
<feature type="binding site" evidence="1">
    <location>
        <position position="96"/>
    </location>
    <ligand>
        <name>S-adenosyl-L-methionine</name>
        <dbReference type="ChEBI" id="CHEBI:59789"/>
    </ligand>
</feature>
<feature type="binding site" evidence="1">
    <location>
        <position position="121"/>
    </location>
    <ligand>
        <name>S-adenosyl-L-methionine</name>
        <dbReference type="ChEBI" id="CHEBI:59789"/>
    </ligand>
</feature>
<gene>
    <name evidence="1" type="primary">rlmE</name>
    <name evidence="1" type="synonym">ftsJ</name>
    <name evidence="1" type="synonym">rrmJ</name>
    <name type="ordered locus">FTF0912c</name>
</gene>
<dbReference type="EC" id="2.1.1.166" evidence="1"/>
<dbReference type="EMBL" id="AM286280">
    <property type="protein sequence ID" value="CAL08928.1"/>
    <property type="molecule type" value="Genomic_DNA"/>
</dbReference>
<dbReference type="RefSeq" id="WP_003017870.1">
    <property type="nucleotide sequence ID" value="NC_008245.1"/>
</dbReference>
<dbReference type="SMR" id="Q14HT5"/>
<dbReference type="KEGG" id="ftf:FTF0912c"/>
<dbReference type="HOGENOM" id="CLU_009422_4_0_6"/>
<dbReference type="GO" id="GO:0005737">
    <property type="term" value="C:cytoplasm"/>
    <property type="evidence" value="ECO:0007669"/>
    <property type="project" value="UniProtKB-SubCell"/>
</dbReference>
<dbReference type="GO" id="GO:0008650">
    <property type="term" value="F:rRNA (uridine-2'-O-)-methyltransferase activity"/>
    <property type="evidence" value="ECO:0007669"/>
    <property type="project" value="UniProtKB-UniRule"/>
</dbReference>
<dbReference type="FunFam" id="3.40.50.150:FF:000005">
    <property type="entry name" value="Ribosomal RNA large subunit methyltransferase E"/>
    <property type="match status" value="1"/>
</dbReference>
<dbReference type="Gene3D" id="3.40.50.150">
    <property type="entry name" value="Vaccinia Virus protein VP39"/>
    <property type="match status" value="1"/>
</dbReference>
<dbReference type="HAMAP" id="MF_01547">
    <property type="entry name" value="RNA_methyltr_E"/>
    <property type="match status" value="1"/>
</dbReference>
<dbReference type="InterPro" id="IPR050082">
    <property type="entry name" value="RNA_methyltr_RlmE"/>
</dbReference>
<dbReference type="InterPro" id="IPR002877">
    <property type="entry name" value="RNA_MeTrfase_FtsJ_dom"/>
</dbReference>
<dbReference type="InterPro" id="IPR015507">
    <property type="entry name" value="rRNA-MeTfrase_E"/>
</dbReference>
<dbReference type="InterPro" id="IPR029063">
    <property type="entry name" value="SAM-dependent_MTases_sf"/>
</dbReference>
<dbReference type="NCBIfam" id="NF008390">
    <property type="entry name" value="PRK11188.1"/>
    <property type="match status" value="1"/>
</dbReference>
<dbReference type="PANTHER" id="PTHR10920">
    <property type="entry name" value="RIBOSOMAL RNA METHYLTRANSFERASE"/>
    <property type="match status" value="1"/>
</dbReference>
<dbReference type="PANTHER" id="PTHR10920:SF18">
    <property type="entry name" value="RRNA METHYLTRANSFERASE 2, MITOCHONDRIAL"/>
    <property type="match status" value="1"/>
</dbReference>
<dbReference type="Pfam" id="PF01728">
    <property type="entry name" value="FtsJ"/>
    <property type="match status" value="1"/>
</dbReference>
<dbReference type="PIRSF" id="PIRSF005461">
    <property type="entry name" value="23S_rRNA_mtase"/>
    <property type="match status" value="1"/>
</dbReference>
<dbReference type="SUPFAM" id="SSF53335">
    <property type="entry name" value="S-adenosyl-L-methionine-dependent methyltransferases"/>
    <property type="match status" value="1"/>
</dbReference>
<accession>Q14HT5</accession>
<evidence type="ECO:0000255" key="1">
    <source>
        <dbReference type="HAMAP-Rule" id="MF_01547"/>
    </source>
</evidence>
<proteinExistence type="inferred from homology"/>
<organism>
    <name type="scientific">Francisella tularensis subsp. tularensis (strain FSC 198)</name>
    <dbReference type="NCBI Taxonomy" id="393115"/>
    <lineage>
        <taxon>Bacteria</taxon>
        <taxon>Pseudomonadati</taxon>
        <taxon>Pseudomonadota</taxon>
        <taxon>Gammaproteobacteria</taxon>
        <taxon>Thiotrichales</taxon>
        <taxon>Francisellaceae</taxon>
        <taxon>Francisella</taxon>
    </lineage>
</organism>
<comment type="function">
    <text evidence="1">Specifically methylates the uridine in position 2552 of 23S rRNA at the 2'-O position of the ribose in the fully assembled 50S ribosomal subunit.</text>
</comment>
<comment type="catalytic activity">
    <reaction evidence="1">
        <text>uridine(2552) in 23S rRNA + S-adenosyl-L-methionine = 2'-O-methyluridine(2552) in 23S rRNA + S-adenosyl-L-homocysteine + H(+)</text>
        <dbReference type="Rhea" id="RHEA:42720"/>
        <dbReference type="Rhea" id="RHEA-COMP:10202"/>
        <dbReference type="Rhea" id="RHEA-COMP:10203"/>
        <dbReference type="ChEBI" id="CHEBI:15378"/>
        <dbReference type="ChEBI" id="CHEBI:57856"/>
        <dbReference type="ChEBI" id="CHEBI:59789"/>
        <dbReference type="ChEBI" id="CHEBI:65315"/>
        <dbReference type="ChEBI" id="CHEBI:74478"/>
        <dbReference type="EC" id="2.1.1.166"/>
    </reaction>
</comment>
<comment type="subcellular location">
    <subcellularLocation>
        <location evidence="1">Cytoplasm</location>
    </subcellularLocation>
</comment>
<comment type="similarity">
    <text evidence="1">Belongs to the class I-like SAM-binding methyltransferase superfamily. RNA methyltransferase RlmE family.</text>
</comment>